<keyword id="KW-0202">Cytokine</keyword>
<keyword id="KW-1015">Disulfide bond</keyword>
<keyword id="KW-0395">Inflammatory response</keyword>
<keyword id="KW-1185">Reference proteome</keyword>
<keyword id="KW-0964">Secreted</keyword>
<keyword id="KW-0732">Signal</keyword>
<accession>A9QWP9</accession>
<evidence type="ECO:0000250" key="1"/>
<evidence type="ECO:0000256" key="2">
    <source>
        <dbReference type="SAM" id="MobiDB-lite"/>
    </source>
</evidence>
<evidence type="ECO:0000305" key="3"/>
<name>CXCL9_BOVIN</name>
<protein>
    <recommendedName>
        <fullName>C-X-C motif chemokine 9</fullName>
    </recommendedName>
    <alternativeName>
        <fullName>Small-inducible cytokine B9</fullName>
    </alternativeName>
</protein>
<comment type="function">
    <text evidence="1">Cytokine that affects the growth, movement, or activation state of cells that participate in immune and inflammatory response. Chemotactic for activated T-cells. Binds to CXCR3 (By similarity).</text>
</comment>
<comment type="subcellular location">
    <subcellularLocation>
        <location evidence="1">Secreted</location>
    </subcellularLocation>
</comment>
<comment type="similarity">
    <text evidence="3">Belongs to the intercrine alpha (chemokine CxC) family.</text>
</comment>
<gene>
    <name type="primary">CXCL9</name>
</gene>
<feature type="signal peptide" evidence="1">
    <location>
        <begin position="1"/>
        <end position="21"/>
    </location>
</feature>
<feature type="chain" id="PRO_0000326169" description="C-X-C motif chemokine 9">
    <location>
        <begin position="22"/>
        <end position="125"/>
    </location>
</feature>
<feature type="region of interest" description="Disordered" evidence="2">
    <location>
        <begin position="91"/>
        <end position="125"/>
    </location>
</feature>
<feature type="compositionally biased region" description="Basic residues" evidence="2">
    <location>
        <begin position="93"/>
        <end position="125"/>
    </location>
</feature>
<feature type="disulfide bond" evidence="1">
    <location>
        <begin position="30"/>
        <end position="57"/>
    </location>
</feature>
<feature type="disulfide bond" evidence="1">
    <location>
        <begin position="32"/>
        <end position="73"/>
    </location>
</feature>
<organism>
    <name type="scientific">Bos taurus</name>
    <name type="common">Bovine</name>
    <dbReference type="NCBI Taxonomy" id="9913"/>
    <lineage>
        <taxon>Eukaryota</taxon>
        <taxon>Metazoa</taxon>
        <taxon>Chordata</taxon>
        <taxon>Craniata</taxon>
        <taxon>Vertebrata</taxon>
        <taxon>Euteleostomi</taxon>
        <taxon>Mammalia</taxon>
        <taxon>Eutheria</taxon>
        <taxon>Laurasiatheria</taxon>
        <taxon>Artiodactyla</taxon>
        <taxon>Ruminantia</taxon>
        <taxon>Pecora</taxon>
        <taxon>Bovidae</taxon>
        <taxon>Bovinae</taxon>
        <taxon>Bos</taxon>
    </lineage>
</organism>
<dbReference type="EMBL" id="EU276061">
    <property type="protein sequence ID" value="ABX72059.1"/>
    <property type="molecule type" value="mRNA"/>
</dbReference>
<dbReference type="RefSeq" id="NP_001106643.1">
    <property type="nucleotide sequence ID" value="NM_001113172.1"/>
</dbReference>
<dbReference type="SMR" id="A9QWP9"/>
<dbReference type="FunCoup" id="A9QWP9">
    <property type="interactions" value="255"/>
</dbReference>
<dbReference type="STRING" id="9913.ENSBTAP00000057632"/>
<dbReference type="PaxDb" id="9913-ENSBTAP00000002257"/>
<dbReference type="Ensembl" id="ENSBTAT00000100670.1">
    <property type="protein sequence ID" value="ENSBTAP00000085237.1"/>
    <property type="gene ID" value="ENSBTAG00000069240.1"/>
</dbReference>
<dbReference type="GeneID" id="513990"/>
<dbReference type="KEGG" id="bta:513990"/>
<dbReference type="CTD" id="4283"/>
<dbReference type="VEuPathDB" id="HostDB:ENSBTAG00000050852"/>
<dbReference type="eggNOG" id="ENOG502TDRN">
    <property type="taxonomic scope" value="Eukaryota"/>
</dbReference>
<dbReference type="GeneTree" id="ENSGT00940000161751"/>
<dbReference type="HOGENOM" id="CLU_143902_2_2_1"/>
<dbReference type="InParanoid" id="A9QWP9"/>
<dbReference type="OMA" id="GKKYQKN"/>
<dbReference type="OrthoDB" id="9948647at2759"/>
<dbReference type="TreeFam" id="TF333433"/>
<dbReference type="Reactome" id="R-BTA-380108">
    <property type="pathway name" value="Chemokine receptors bind chemokines"/>
</dbReference>
<dbReference type="Reactome" id="R-BTA-418594">
    <property type="pathway name" value="G alpha (i) signalling events"/>
</dbReference>
<dbReference type="Proteomes" id="UP000009136">
    <property type="component" value="Chromosome 6"/>
</dbReference>
<dbReference type="Bgee" id="ENSBTAG00000050852">
    <property type="expression patterns" value="Expressed in abdominal lymph node and 92 other cell types or tissues"/>
</dbReference>
<dbReference type="GO" id="GO:0005615">
    <property type="term" value="C:extracellular space"/>
    <property type="evidence" value="ECO:0000318"/>
    <property type="project" value="GO_Central"/>
</dbReference>
<dbReference type="GO" id="GO:0008009">
    <property type="term" value="F:chemokine activity"/>
    <property type="evidence" value="ECO:0000250"/>
    <property type="project" value="UniProtKB"/>
</dbReference>
<dbReference type="GO" id="GO:0045236">
    <property type="term" value="F:CXCR chemokine receptor binding"/>
    <property type="evidence" value="ECO:0000318"/>
    <property type="project" value="GO_Central"/>
</dbReference>
<dbReference type="GO" id="GO:0048248">
    <property type="term" value="F:CXCR3 chemokine receptor binding"/>
    <property type="evidence" value="ECO:0000250"/>
    <property type="project" value="UniProtKB"/>
</dbReference>
<dbReference type="GO" id="GO:0007189">
    <property type="term" value="P:adenylate cyclase-activating G protein-coupled receptor signaling pathway"/>
    <property type="evidence" value="ECO:0000250"/>
    <property type="project" value="UniProtKB"/>
</dbReference>
<dbReference type="GO" id="GO:0071222">
    <property type="term" value="P:cellular response to lipopolysaccharide"/>
    <property type="evidence" value="ECO:0000318"/>
    <property type="project" value="GO_Central"/>
</dbReference>
<dbReference type="GO" id="GO:0070098">
    <property type="term" value="P:chemokine-mediated signaling pathway"/>
    <property type="evidence" value="ECO:0000318"/>
    <property type="project" value="GO_Central"/>
</dbReference>
<dbReference type="GO" id="GO:0006935">
    <property type="term" value="P:chemotaxis"/>
    <property type="evidence" value="ECO:0000250"/>
    <property type="project" value="UniProtKB"/>
</dbReference>
<dbReference type="GO" id="GO:0006955">
    <property type="term" value="P:immune response"/>
    <property type="evidence" value="ECO:0007669"/>
    <property type="project" value="InterPro"/>
</dbReference>
<dbReference type="GO" id="GO:0006954">
    <property type="term" value="P:inflammatory response"/>
    <property type="evidence" value="ECO:0000318"/>
    <property type="project" value="GO_Central"/>
</dbReference>
<dbReference type="GO" id="GO:0030593">
    <property type="term" value="P:neutrophil chemotaxis"/>
    <property type="evidence" value="ECO:0000318"/>
    <property type="project" value="GO_Central"/>
</dbReference>
<dbReference type="GO" id="GO:0051281">
    <property type="term" value="P:positive regulation of release of sequestered calcium ion into cytosol"/>
    <property type="evidence" value="ECO:0000250"/>
    <property type="project" value="UniProtKB"/>
</dbReference>
<dbReference type="GO" id="GO:0042127">
    <property type="term" value="P:regulation of cell population proliferation"/>
    <property type="evidence" value="ECO:0000250"/>
    <property type="project" value="UniProtKB"/>
</dbReference>
<dbReference type="CDD" id="cd00273">
    <property type="entry name" value="Chemokine_CXC"/>
    <property type="match status" value="1"/>
</dbReference>
<dbReference type="FunFam" id="2.40.50.40:FF:000004">
    <property type="entry name" value="C-X-C motif chemokine"/>
    <property type="match status" value="1"/>
</dbReference>
<dbReference type="Gene3D" id="2.40.50.40">
    <property type="match status" value="1"/>
</dbReference>
<dbReference type="InterPro" id="IPR039809">
    <property type="entry name" value="Chemokine_b/g/d"/>
</dbReference>
<dbReference type="InterPro" id="IPR001089">
    <property type="entry name" value="Chemokine_CXC"/>
</dbReference>
<dbReference type="InterPro" id="IPR018048">
    <property type="entry name" value="Chemokine_CXC_CS"/>
</dbReference>
<dbReference type="InterPro" id="IPR001811">
    <property type="entry name" value="Chemokine_IL8-like_dom"/>
</dbReference>
<dbReference type="InterPro" id="IPR033899">
    <property type="entry name" value="CXC_Chemokine_domain"/>
</dbReference>
<dbReference type="InterPro" id="IPR036048">
    <property type="entry name" value="Interleukin_8-like_sf"/>
</dbReference>
<dbReference type="PANTHER" id="PTHR12015:SF210">
    <property type="entry name" value="C-X-C MOTIF CHEMOKINE 9"/>
    <property type="match status" value="1"/>
</dbReference>
<dbReference type="PANTHER" id="PTHR12015">
    <property type="entry name" value="SMALL INDUCIBLE CYTOKINE A"/>
    <property type="match status" value="1"/>
</dbReference>
<dbReference type="Pfam" id="PF00048">
    <property type="entry name" value="IL8"/>
    <property type="match status" value="1"/>
</dbReference>
<dbReference type="PRINTS" id="PR00437">
    <property type="entry name" value="SMALLCYTKCXC"/>
</dbReference>
<dbReference type="SMART" id="SM00199">
    <property type="entry name" value="SCY"/>
    <property type="match status" value="1"/>
</dbReference>
<dbReference type="SUPFAM" id="SSF54117">
    <property type="entry name" value="Interleukin 8-like chemokines"/>
    <property type="match status" value="1"/>
</dbReference>
<dbReference type="PROSITE" id="PS00471">
    <property type="entry name" value="SMALL_CYTOKINES_CXC"/>
    <property type="match status" value="1"/>
</dbReference>
<sequence length="125" mass="14106">MKKSAPLFLGIIFLTLTGVQGVPAIRNGRCSCINTSQGMIHPKSLKDLKQFAPSPSCEKTEIIATMKNGNEACLNPDLPEVKELIKEWEKQVNQKKKQRKGKKYKKTKKVPKVKRSQRPSQKKTT</sequence>
<reference key="1">
    <citation type="submission" date="2007-11" db="EMBL/GenBank/DDBJ databases">
        <title>U.S. veterinary immune reagent network: expressed bovine gene sequences.</title>
        <authorList>
            <consortium name="U.S. Veterinary Immune Reagent Network"/>
            <person name="Hudgens T."/>
            <person name="Tompkins D."/>
            <person name="Baldwin C.L."/>
        </authorList>
    </citation>
    <scope>NUCLEOTIDE SEQUENCE [LARGE SCALE MRNA]</scope>
    <source>
        <strain>Belted Galloway</strain>
        <tissue>Peripheral blood</tissue>
    </source>
</reference>
<proteinExistence type="evidence at transcript level"/>